<gene>
    <name evidence="1" type="primary">rlmL</name>
    <name type="ordered locus">SO_1851</name>
</gene>
<proteinExistence type="inferred from homology"/>
<accession>Q8EFW4</accession>
<evidence type="ECO:0000255" key="1">
    <source>
        <dbReference type="HAMAP-Rule" id="MF_01858"/>
    </source>
</evidence>
<organism>
    <name type="scientific">Shewanella oneidensis (strain ATCC 700550 / JCM 31522 / CIP 106686 / LMG 19005 / NCIMB 14063 / MR-1)</name>
    <dbReference type="NCBI Taxonomy" id="211586"/>
    <lineage>
        <taxon>Bacteria</taxon>
        <taxon>Pseudomonadati</taxon>
        <taxon>Pseudomonadota</taxon>
        <taxon>Gammaproteobacteria</taxon>
        <taxon>Alteromonadales</taxon>
        <taxon>Shewanellaceae</taxon>
        <taxon>Shewanella</taxon>
    </lineage>
</organism>
<feature type="chain" id="PRO_0000366827" description="Ribosomal RNA large subunit methyltransferase K/L">
    <location>
        <begin position="1"/>
        <end position="711"/>
    </location>
</feature>
<feature type="domain" description="THUMP" evidence="1">
    <location>
        <begin position="43"/>
        <end position="154"/>
    </location>
</feature>
<dbReference type="EC" id="2.1.1.173" evidence="1"/>
<dbReference type="EC" id="2.1.1.264" evidence="1"/>
<dbReference type="EMBL" id="AE014299">
    <property type="protein sequence ID" value="AAN54903.1"/>
    <property type="molecule type" value="Genomic_DNA"/>
</dbReference>
<dbReference type="RefSeq" id="NP_717459.1">
    <property type="nucleotide sequence ID" value="NC_004347.2"/>
</dbReference>
<dbReference type="RefSeq" id="WP_011071965.1">
    <property type="nucleotide sequence ID" value="NC_004347.2"/>
</dbReference>
<dbReference type="SMR" id="Q8EFW4"/>
<dbReference type="STRING" id="211586.SO_1851"/>
<dbReference type="PaxDb" id="211586-SO_1851"/>
<dbReference type="KEGG" id="son:SO_1851"/>
<dbReference type="PATRIC" id="fig|211586.12.peg.1779"/>
<dbReference type="eggNOG" id="COG0116">
    <property type="taxonomic scope" value="Bacteria"/>
</dbReference>
<dbReference type="eggNOG" id="COG1092">
    <property type="taxonomic scope" value="Bacteria"/>
</dbReference>
<dbReference type="HOGENOM" id="CLU_014042_2_0_6"/>
<dbReference type="OrthoDB" id="9809404at2"/>
<dbReference type="PhylomeDB" id="Q8EFW4"/>
<dbReference type="BioCyc" id="SONE211586:G1GMP-1703-MONOMER"/>
<dbReference type="Proteomes" id="UP000008186">
    <property type="component" value="Chromosome"/>
</dbReference>
<dbReference type="GO" id="GO:0005737">
    <property type="term" value="C:cytoplasm"/>
    <property type="evidence" value="ECO:0007669"/>
    <property type="project" value="UniProtKB-SubCell"/>
</dbReference>
<dbReference type="GO" id="GO:0052915">
    <property type="term" value="F:23S rRNA (guanine(2445)-N(2))-methyltransferase activity"/>
    <property type="evidence" value="ECO:0007669"/>
    <property type="project" value="UniProtKB-UniRule"/>
</dbReference>
<dbReference type="GO" id="GO:0003723">
    <property type="term" value="F:RNA binding"/>
    <property type="evidence" value="ECO:0007669"/>
    <property type="project" value="UniProtKB-KW"/>
</dbReference>
<dbReference type="GO" id="GO:0008990">
    <property type="term" value="F:rRNA (guanine-N2-)-methyltransferase activity"/>
    <property type="evidence" value="ECO:0000318"/>
    <property type="project" value="GO_Central"/>
</dbReference>
<dbReference type="GO" id="GO:0070043">
    <property type="term" value="F:rRNA (guanine-N7-)-methyltransferase activity"/>
    <property type="evidence" value="ECO:0000318"/>
    <property type="project" value="GO_Central"/>
</dbReference>
<dbReference type="CDD" id="cd02440">
    <property type="entry name" value="AdoMet_MTases"/>
    <property type="match status" value="1"/>
</dbReference>
<dbReference type="CDD" id="cd11715">
    <property type="entry name" value="THUMP_AdoMetMT"/>
    <property type="match status" value="1"/>
</dbReference>
<dbReference type="FunFam" id="3.40.50.150:FF:000039">
    <property type="entry name" value="Ribosomal RNA large subunit methyltransferase K/L"/>
    <property type="match status" value="1"/>
</dbReference>
<dbReference type="Gene3D" id="3.30.2130.30">
    <property type="match status" value="1"/>
</dbReference>
<dbReference type="Gene3D" id="3.30.750.80">
    <property type="entry name" value="RNA methyltransferase domain (HRMD) like"/>
    <property type="match status" value="1"/>
</dbReference>
<dbReference type="Gene3D" id="3.40.50.150">
    <property type="entry name" value="Vaccinia Virus protein VP39"/>
    <property type="match status" value="2"/>
</dbReference>
<dbReference type="HAMAP" id="MF_01858">
    <property type="entry name" value="23SrRNA_methyltr_KL"/>
    <property type="match status" value="1"/>
</dbReference>
<dbReference type="InterPro" id="IPR017244">
    <property type="entry name" value="23SrRNA_methyltr_KL"/>
</dbReference>
<dbReference type="InterPro" id="IPR002052">
    <property type="entry name" value="DNA_methylase_N6_adenine_CS"/>
</dbReference>
<dbReference type="InterPro" id="IPR000241">
    <property type="entry name" value="RlmKL-like_Mtase"/>
</dbReference>
<dbReference type="InterPro" id="IPR053943">
    <property type="entry name" value="RlmKL-like_Mtase_CS"/>
</dbReference>
<dbReference type="InterPro" id="IPR054170">
    <property type="entry name" value="RlmL_1st"/>
</dbReference>
<dbReference type="InterPro" id="IPR019614">
    <property type="entry name" value="SAM-dep_methyl-trfase"/>
</dbReference>
<dbReference type="InterPro" id="IPR029063">
    <property type="entry name" value="SAM-dependent_MTases_sf"/>
</dbReference>
<dbReference type="InterPro" id="IPR004114">
    <property type="entry name" value="THUMP_dom"/>
</dbReference>
<dbReference type="NCBIfam" id="NF008748">
    <property type="entry name" value="PRK11783.1"/>
    <property type="match status" value="1"/>
</dbReference>
<dbReference type="PANTHER" id="PTHR47313">
    <property type="entry name" value="RIBOSOMAL RNA LARGE SUBUNIT METHYLTRANSFERASE K/L"/>
    <property type="match status" value="1"/>
</dbReference>
<dbReference type="PANTHER" id="PTHR47313:SF1">
    <property type="entry name" value="RIBOSOMAL RNA LARGE SUBUNIT METHYLTRANSFERASE K_L"/>
    <property type="match status" value="1"/>
</dbReference>
<dbReference type="Pfam" id="PF10672">
    <property type="entry name" value="Methyltrans_SAM"/>
    <property type="match status" value="1"/>
</dbReference>
<dbReference type="Pfam" id="PF22020">
    <property type="entry name" value="RlmL_1st"/>
    <property type="match status" value="1"/>
</dbReference>
<dbReference type="Pfam" id="PF02926">
    <property type="entry name" value="THUMP"/>
    <property type="match status" value="1"/>
</dbReference>
<dbReference type="Pfam" id="PF01170">
    <property type="entry name" value="UPF0020"/>
    <property type="match status" value="1"/>
</dbReference>
<dbReference type="PIRSF" id="PIRSF037618">
    <property type="entry name" value="RNA_Mtase_bacteria_prd"/>
    <property type="match status" value="1"/>
</dbReference>
<dbReference type="SMART" id="SM00981">
    <property type="entry name" value="THUMP"/>
    <property type="match status" value="1"/>
</dbReference>
<dbReference type="SUPFAM" id="SSF53335">
    <property type="entry name" value="S-adenosyl-L-methionine-dependent methyltransferases"/>
    <property type="match status" value="2"/>
</dbReference>
<dbReference type="PROSITE" id="PS51165">
    <property type="entry name" value="THUMP"/>
    <property type="match status" value="1"/>
</dbReference>
<dbReference type="PROSITE" id="PS01261">
    <property type="entry name" value="UPF0020"/>
    <property type="match status" value="1"/>
</dbReference>
<reference key="1">
    <citation type="journal article" date="2002" name="Nat. Biotechnol.">
        <title>Genome sequence of the dissimilatory metal ion-reducing bacterium Shewanella oneidensis.</title>
        <authorList>
            <person name="Heidelberg J.F."/>
            <person name="Paulsen I.T."/>
            <person name="Nelson K.E."/>
            <person name="Gaidos E.J."/>
            <person name="Nelson W.C."/>
            <person name="Read T.D."/>
            <person name="Eisen J.A."/>
            <person name="Seshadri R."/>
            <person name="Ward N.L."/>
            <person name="Methe B.A."/>
            <person name="Clayton R.A."/>
            <person name="Meyer T."/>
            <person name="Tsapin A."/>
            <person name="Scott J."/>
            <person name="Beanan M.J."/>
            <person name="Brinkac L.M."/>
            <person name="Daugherty S.C."/>
            <person name="DeBoy R.T."/>
            <person name="Dodson R.J."/>
            <person name="Durkin A.S."/>
            <person name="Haft D.H."/>
            <person name="Kolonay J.F."/>
            <person name="Madupu R."/>
            <person name="Peterson J.D."/>
            <person name="Umayam L.A."/>
            <person name="White O."/>
            <person name="Wolf A.M."/>
            <person name="Vamathevan J.J."/>
            <person name="Weidman J.F."/>
            <person name="Impraim M."/>
            <person name="Lee K."/>
            <person name="Berry K.J."/>
            <person name="Lee C."/>
            <person name="Mueller J."/>
            <person name="Khouri H.M."/>
            <person name="Gill J."/>
            <person name="Utterback T.R."/>
            <person name="McDonald L.A."/>
            <person name="Feldblyum T.V."/>
            <person name="Smith H.O."/>
            <person name="Venter J.C."/>
            <person name="Nealson K.H."/>
            <person name="Fraser C.M."/>
        </authorList>
    </citation>
    <scope>NUCLEOTIDE SEQUENCE [LARGE SCALE GENOMIC DNA]</scope>
    <source>
        <strain>ATCC 700550 / JCM 31522 / CIP 106686 / LMG 19005 / NCIMB 14063 / MR-1</strain>
    </source>
</reference>
<keyword id="KW-0963">Cytoplasm</keyword>
<keyword id="KW-0489">Methyltransferase</keyword>
<keyword id="KW-1185">Reference proteome</keyword>
<keyword id="KW-0694">RNA-binding</keyword>
<keyword id="KW-0698">rRNA processing</keyword>
<keyword id="KW-0949">S-adenosyl-L-methionine</keyword>
<keyword id="KW-0808">Transferase</keyword>
<sequence>MLNFFAAAPKGFEYSLAQELTEFGATEIKESVAGVYFTAPLTLAYRITLWTRLASRIVLVIYKGPCESAEQLYNAAYCIDWSAHFSNRNTFSIDFHGTGGFINNTQFGALKIKDAIVDRFRDDGDARPNVARIDADIKVDAHFRNGVITIAMNFSGPSLHQRGYRSTTGEAPLKENLAANMLVRSGWKAAPTTLLDPFCGSGTVLIEAALMAADIAPGLQRNRFGFEHWRRHDKATWHEIVEEAKARASLGVKRCEVKFYGSDIDSRLVALAKRNAQNAGVLELIEFNVANALNVEPPAAEGYLITNPPYGERLGSVSELLQLYYQLGDKFKKEFGGWKVAMLCSDIELISALKLKADKQMKMFNGALECAFNLYTLHAQSTRRDTPVLPEGVDIADIAPAFANRIKKNAKQFEKWAQKEGIDSYRLYDADIPEYNVAVDKYLDYVVVQEYMAPASIPEAVTKRRLSDVLLALPAAIGVDPHKIIMKTRERQKGTNQYQKLDERKLELITTEYGAKFKLNLTGYLDTGLFLDHRLTRRLVGQKSKGRRVLNLFSYTGSASVHAALGGAKSVTTVDMSNTYLAWAKENFALNNLSGKQYEFVQADCLQWIRDCNEQYDLIFIDPPTFSNSKRMEDSFDVQRDHVNLLGMLIKLLSPNGELVFSNNKRKFKMDTETLTKMKIKVQNIDDMTLPLDYKRNPHIHNTWLITHADK</sequence>
<name>RLMKL_SHEON</name>
<comment type="function">
    <text evidence="1">Specifically methylates the guanine in position 2445 (m2G2445) and the guanine in position 2069 (m7G2069) of 23S rRNA.</text>
</comment>
<comment type="catalytic activity">
    <reaction evidence="1">
        <text>guanosine(2445) in 23S rRNA + S-adenosyl-L-methionine = N(2)-methylguanosine(2445) in 23S rRNA + S-adenosyl-L-homocysteine + H(+)</text>
        <dbReference type="Rhea" id="RHEA:42740"/>
        <dbReference type="Rhea" id="RHEA-COMP:10215"/>
        <dbReference type="Rhea" id="RHEA-COMP:10216"/>
        <dbReference type="ChEBI" id="CHEBI:15378"/>
        <dbReference type="ChEBI" id="CHEBI:57856"/>
        <dbReference type="ChEBI" id="CHEBI:59789"/>
        <dbReference type="ChEBI" id="CHEBI:74269"/>
        <dbReference type="ChEBI" id="CHEBI:74481"/>
        <dbReference type="EC" id="2.1.1.173"/>
    </reaction>
</comment>
<comment type="catalytic activity">
    <reaction evidence="1">
        <text>guanosine(2069) in 23S rRNA + S-adenosyl-L-methionine = N(2)-methylguanosine(2069) in 23S rRNA + S-adenosyl-L-homocysteine + H(+)</text>
        <dbReference type="Rhea" id="RHEA:43772"/>
        <dbReference type="Rhea" id="RHEA-COMP:10688"/>
        <dbReference type="Rhea" id="RHEA-COMP:10689"/>
        <dbReference type="ChEBI" id="CHEBI:15378"/>
        <dbReference type="ChEBI" id="CHEBI:57856"/>
        <dbReference type="ChEBI" id="CHEBI:59789"/>
        <dbReference type="ChEBI" id="CHEBI:74269"/>
        <dbReference type="ChEBI" id="CHEBI:74481"/>
        <dbReference type="EC" id="2.1.1.264"/>
    </reaction>
</comment>
<comment type="subcellular location">
    <subcellularLocation>
        <location evidence="1">Cytoplasm</location>
    </subcellularLocation>
</comment>
<comment type="similarity">
    <text evidence="1">Belongs to the methyltransferase superfamily. RlmKL family.</text>
</comment>
<protein>
    <recommendedName>
        <fullName evidence="1">Ribosomal RNA large subunit methyltransferase K/L</fullName>
    </recommendedName>
    <domain>
        <recommendedName>
            <fullName evidence="1">23S rRNA m2G2445 methyltransferase</fullName>
            <ecNumber evidence="1">2.1.1.173</ecNumber>
        </recommendedName>
        <alternativeName>
            <fullName evidence="1">rRNA (guanine-N(2)-)-methyltransferase RlmL</fullName>
        </alternativeName>
    </domain>
    <domain>
        <recommendedName>
            <fullName evidence="1">23S rRNA m7G2069 methyltransferase</fullName>
            <ecNumber evidence="1">2.1.1.264</ecNumber>
        </recommendedName>
        <alternativeName>
            <fullName evidence="1">rRNA (guanine-N(7)-)-methyltransferase RlmK</fullName>
        </alternativeName>
    </domain>
</protein>